<reference key="1">
    <citation type="journal article" date="2006" name="J. Bacteriol.">
        <title>Complete genome sequence of the dehalorespiring bacterium Desulfitobacterium hafniense Y51 and comparison with Dehalococcoides ethenogenes 195.</title>
        <authorList>
            <person name="Nonaka H."/>
            <person name="Keresztes G."/>
            <person name="Shinoda Y."/>
            <person name="Ikenaga Y."/>
            <person name="Abe M."/>
            <person name="Naito K."/>
            <person name="Inatomi K."/>
            <person name="Furukawa K."/>
            <person name="Inui M."/>
            <person name="Yukawa H."/>
        </authorList>
    </citation>
    <scope>NUCLEOTIDE SEQUENCE [LARGE SCALE GENOMIC DNA]</scope>
    <source>
        <strain>Y51</strain>
    </source>
</reference>
<proteinExistence type="inferred from homology"/>
<comment type="function">
    <text evidence="1">Excises uracil residues from the DNA which can arise as a result of misincorporation of dUMP residues by DNA polymerase or due to deamination of cytosine.</text>
</comment>
<comment type="catalytic activity">
    <reaction evidence="1">
        <text>Hydrolyzes single-stranded DNA or mismatched double-stranded DNA and polynucleotides, releasing free uracil.</text>
        <dbReference type="EC" id="3.2.2.27"/>
    </reaction>
</comment>
<comment type="subcellular location">
    <subcellularLocation>
        <location evidence="1">Cytoplasm</location>
    </subcellularLocation>
</comment>
<comment type="similarity">
    <text evidence="1">Belongs to the uracil-DNA glycosylase (UDG) superfamily. UNG family.</text>
</comment>
<keyword id="KW-0963">Cytoplasm</keyword>
<keyword id="KW-0227">DNA damage</keyword>
<keyword id="KW-0234">DNA repair</keyword>
<keyword id="KW-0378">Hydrolase</keyword>
<keyword id="KW-1185">Reference proteome</keyword>
<gene>
    <name evidence="1" type="primary">ung</name>
    <name type="ordered locus">DSY1200</name>
</gene>
<protein>
    <recommendedName>
        <fullName evidence="1">Uracil-DNA glycosylase</fullName>
        <shortName evidence="1">UDG</shortName>
        <ecNumber evidence="1">3.2.2.27</ecNumber>
    </recommendedName>
</protein>
<organism>
    <name type="scientific">Desulfitobacterium hafniense (strain Y51)</name>
    <dbReference type="NCBI Taxonomy" id="138119"/>
    <lineage>
        <taxon>Bacteria</taxon>
        <taxon>Bacillati</taxon>
        <taxon>Bacillota</taxon>
        <taxon>Clostridia</taxon>
        <taxon>Eubacteriales</taxon>
        <taxon>Desulfitobacteriaceae</taxon>
        <taxon>Desulfitobacterium</taxon>
    </lineage>
</organism>
<sequence>MQILKNDWHELLKDEFEQEYYQQLRKHLIQEYRTRTIYPDMYDIFNALHFTSYQDVKVVILGQDPYHGPNQAHGLSFSVKPGVPAPPSLQNIFKELQSDLGCRIPNHGYLKKWAEQGVLLLNTSLTVRAGQANSHAQIGWHQFTDKVIAALSQRQDPVVFILWGKNAQAKQSIIGSQHFIIKSVHPSPLSAHAGFFGSKPFSKANNFLVSQGKEPIDWQIEDI</sequence>
<accession>Q24YA3</accession>
<feature type="chain" id="PRO_1000058125" description="Uracil-DNA glycosylase">
    <location>
        <begin position="1"/>
        <end position="223"/>
    </location>
</feature>
<feature type="active site" description="Proton acceptor" evidence="1">
    <location>
        <position position="64"/>
    </location>
</feature>
<name>UNG_DESHY</name>
<dbReference type="EC" id="3.2.2.27" evidence="1"/>
<dbReference type="EMBL" id="AP008230">
    <property type="protein sequence ID" value="BAE82989.1"/>
    <property type="molecule type" value="Genomic_DNA"/>
</dbReference>
<dbReference type="RefSeq" id="WP_005814489.1">
    <property type="nucleotide sequence ID" value="NC_007907.1"/>
</dbReference>
<dbReference type="SMR" id="Q24YA3"/>
<dbReference type="STRING" id="138119.DSY1200"/>
<dbReference type="KEGG" id="dsy:DSY1200"/>
<dbReference type="eggNOG" id="COG0692">
    <property type="taxonomic scope" value="Bacteria"/>
</dbReference>
<dbReference type="HOGENOM" id="CLU_032162_3_0_9"/>
<dbReference type="Proteomes" id="UP000001946">
    <property type="component" value="Chromosome"/>
</dbReference>
<dbReference type="GO" id="GO:0005737">
    <property type="term" value="C:cytoplasm"/>
    <property type="evidence" value="ECO:0007669"/>
    <property type="project" value="UniProtKB-SubCell"/>
</dbReference>
<dbReference type="GO" id="GO:0004844">
    <property type="term" value="F:uracil DNA N-glycosylase activity"/>
    <property type="evidence" value="ECO:0007669"/>
    <property type="project" value="UniProtKB-UniRule"/>
</dbReference>
<dbReference type="GO" id="GO:0097510">
    <property type="term" value="P:base-excision repair, AP site formation via deaminated base removal"/>
    <property type="evidence" value="ECO:0007669"/>
    <property type="project" value="TreeGrafter"/>
</dbReference>
<dbReference type="CDD" id="cd10027">
    <property type="entry name" value="UDG-F1-like"/>
    <property type="match status" value="1"/>
</dbReference>
<dbReference type="FunFam" id="3.40.470.10:FF:000001">
    <property type="entry name" value="Uracil-DNA glycosylase"/>
    <property type="match status" value="1"/>
</dbReference>
<dbReference type="Gene3D" id="3.40.470.10">
    <property type="entry name" value="Uracil-DNA glycosylase-like domain"/>
    <property type="match status" value="1"/>
</dbReference>
<dbReference type="HAMAP" id="MF_00148">
    <property type="entry name" value="UDG"/>
    <property type="match status" value="1"/>
</dbReference>
<dbReference type="InterPro" id="IPR002043">
    <property type="entry name" value="UDG_fam1"/>
</dbReference>
<dbReference type="InterPro" id="IPR018085">
    <property type="entry name" value="Ura-DNA_Glyclase_AS"/>
</dbReference>
<dbReference type="InterPro" id="IPR005122">
    <property type="entry name" value="Uracil-DNA_glycosylase-like"/>
</dbReference>
<dbReference type="InterPro" id="IPR036895">
    <property type="entry name" value="Uracil-DNA_glycosylase-like_sf"/>
</dbReference>
<dbReference type="NCBIfam" id="NF003588">
    <property type="entry name" value="PRK05254.1-1"/>
    <property type="match status" value="1"/>
</dbReference>
<dbReference type="NCBIfam" id="NF003589">
    <property type="entry name" value="PRK05254.1-2"/>
    <property type="match status" value="1"/>
</dbReference>
<dbReference type="NCBIfam" id="NF003591">
    <property type="entry name" value="PRK05254.1-4"/>
    <property type="match status" value="1"/>
</dbReference>
<dbReference type="NCBIfam" id="NF003592">
    <property type="entry name" value="PRK05254.1-5"/>
    <property type="match status" value="1"/>
</dbReference>
<dbReference type="NCBIfam" id="TIGR00628">
    <property type="entry name" value="ung"/>
    <property type="match status" value="1"/>
</dbReference>
<dbReference type="PANTHER" id="PTHR11264">
    <property type="entry name" value="URACIL-DNA GLYCOSYLASE"/>
    <property type="match status" value="1"/>
</dbReference>
<dbReference type="PANTHER" id="PTHR11264:SF0">
    <property type="entry name" value="URACIL-DNA GLYCOSYLASE"/>
    <property type="match status" value="1"/>
</dbReference>
<dbReference type="Pfam" id="PF03167">
    <property type="entry name" value="UDG"/>
    <property type="match status" value="1"/>
</dbReference>
<dbReference type="SMART" id="SM00986">
    <property type="entry name" value="UDG"/>
    <property type="match status" value="1"/>
</dbReference>
<dbReference type="SMART" id="SM00987">
    <property type="entry name" value="UreE_C"/>
    <property type="match status" value="1"/>
</dbReference>
<dbReference type="SUPFAM" id="SSF52141">
    <property type="entry name" value="Uracil-DNA glycosylase-like"/>
    <property type="match status" value="1"/>
</dbReference>
<dbReference type="PROSITE" id="PS00130">
    <property type="entry name" value="U_DNA_GLYCOSYLASE"/>
    <property type="match status" value="1"/>
</dbReference>
<evidence type="ECO:0000255" key="1">
    <source>
        <dbReference type="HAMAP-Rule" id="MF_00148"/>
    </source>
</evidence>